<keyword id="KW-0687">Ribonucleoprotein</keyword>
<keyword id="KW-0689">Ribosomal protein</keyword>
<keyword id="KW-0694">RNA-binding</keyword>
<keyword id="KW-0699">rRNA-binding</keyword>
<keyword id="KW-0820">tRNA-binding</keyword>
<name>RS7_XANC8</name>
<organism>
    <name type="scientific">Xanthomonas campestris pv. campestris (strain 8004)</name>
    <dbReference type="NCBI Taxonomy" id="314565"/>
    <lineage>
        <taxon>Bacteria</taxon>
        <taxon>Pseudomonadati</taxon>
        <taxon>Pseudomonadota</taxon>
        <taxon>Gammaproteobacteria</taxon>
        <taxon>Lysobacterales</taxon>
        <taxon>Lysobacteraceae</taxon>
        <taxon>Xanthomonas</taxon>
    </lineage>
</organism>
<comment type="function">
    <text evidence="1">One of the primary rRNA binding proteins, it binds directly to 16S rRNA where it nucleates assembly of the head domain of the 30S subunit. Is located at the subunit interface close to the decoding center, probably blocks exit of the E-site tRNA.</text>
</comment>
<comment type="subunit">
    <text evidence="1">Part of the 30S ribosomal subunit. Contacts proteins S9 and S11.</text>
</comment>
<comment type="similarity">
    <text evidence="1">Belongs to the universal ribosomal protein uS7 family.</text>
</comment>
<protein>
    <recommendedName>
        <fullName evidence="1">Small ribosomal subunit protein uS7</fullName>
    </recommendedName>
    <alternativeName>
        <fullName evidence="2">30S ribosomal protein S7</fullName>
    </alternativeName>
</protein>
<proteinExistence type="inferred from homology"/>
<sequence length="155" mass="17260">MSRKGSTPQRTVLPDPKHGSETIARFINMVMQSGKKSVAEKIVYGAMDVIGEKNPNAVELVQKALDNVAPAVEVKSRRVGGATYQVPVEVRSSRRMALAMRWLIDSARKRGENTMPRKLAAELLDASESRGGAIKKREETHRMAEANKAFAHYRW</sequence>
<gene>
    <name evidence="1" type="primary">rpsG</name>
    <name type="ordered locus">XC_3344</name>
</gene>
<dbReference type="EMBL" id="CP000050">
    <property type="protein sequence ID" value="AAY50388.1"/>
    <property type="molecule type" value="Genomic_DNA"/>
</dbReference>
<dbReference type="RefSeq" id="WP_005993356.1">
    <property type="nucleotide sequence ID" value="NZ_CP155948.1"/>
</dbReference>
<dbReference type="SMR" id="Q4URD5"/>
<dbReference type="GeneID" id="97210500"/>
<dbReference type="KEGG" id="xcb:XC_3344"/>
<dbReference type="HOGENOM" id="CLU_072226_1_1_6"/>
<dbReference type="Proteomes" id="UP000000420">
    <property type="component" value="Chromosome"/>
</dbReference>
<dbReference type="GO" id="GO:0015935">
    <property type="term" value="C:small ribosomal subunit"/>
    <property type="evidence" value="ECO:0007669"/>
    <property type="project" value="InterPro"/>
</dbReference>
<dbReference type="GO" id="GO:0019843">
    <property type="term" value="F:rRNA binding"/>
    <property type="evidence" value="ECO:0007669"/>
    <property type="project" value="UniProtKB-UniRule"/>
</dbReference>
<dbReference type="GO" id="GO:0003735">
    <property type="term" value="F:structural constituent of ribosome"/>
    <property type="evidence" value="ECO:0007669"/>
    <property type="project" value="InterPro"/>
</dbReference>
<dbReference type="GO" id="GO:0000049">
    <property type="term" value="F:tRNA binding"/>
    <property type="evidence" value="ECO:0007669"/>
    <property type="project" value="UniProtKB-UniRule"/>
</dbReference>
<dbReference type="GO" id="GO:0006412">
    <property type="term" value="P:translation"/>
    <property type="evidence" value="ECO:0007669"/>
    <property type="project" value="UniProtKB-UniRule"/>
</dbReference>
<dbReference type="CDD" id="cd14869">
    <property type="entry name" value="uS7_Bacteria"/>
    <property type="match status" value="1"/>
</dbReference>
<dbReference type="FunFam" id="1.10.455.10:FF:000001">
    <property type="entry name" value="30S ribosomal protein S7"/>
    <property type="match status" value="1"/>
</dbReference>
<dbReference type="Gene3D" id="1.10.455.10">
    <property type="entry name" value="Ribosomal protein S7 domain"/>
    <property type="match status" value="1"/>
</dbReference>
<dbReference type="HAMAP" id="MF_00480_B">
    <property type="entry name" value="Ribosomal_uS7_B"/>
    <property type="match status" value="1"/>
</dbReference>
<dbReference type="InterPro" id="IPR000235">
    <property type="entry name" value="Ribosomal_uS7"/>
</dbReference>
<dbReference type="InterPro" id="IPR005717">
    <property type="entry name" value="Ribosomal_uS7_bac/org-type"/>
</dbReference>
<dbReference type="InterPro" id="IPR020606">
    <property type="entry name" value="Ribosomal_uS7_CS"/>
</dbReference>
<dbReference type="InterPro" id="IPR023798">
    <property type="entry name" value="Ribosomal_uS7_dom"/>
</dbReference>
<dbReference type="InterPro" id="IPR036823">
    <property type="entry name" value="Ribosomal_uS7_dom_sf"/>
</dbReference>
<dbReference type="NCBIfam" id="TIGR01029">
    <property type="entry name" value="rpsG_bact"/>
    <property type="match status" value="1"/>
</dbReference>
<dbReference type="PANTHER" id="PTHR11205">
    <property type="entry name" value="RIBOSOMAL PROTEIN S7"/>
    <property type="match status" value="1"/>
</dbReference>
<dbReference type="Pfam" id="PF00177">
    <property type="entry name" value="Ribosomal_S7"/>
    <property type="match status" value="1"/>
</dbReference>
<dbReference type="PIRSF" id="PIRSF002122">
    <property type="entry name" value="RPS7p_RPS7a_RPS5e_RPS7o"/>
    <property type="match status" value="1"/>
</dbReference>
<dbReference type="SUPFAM" id="SSF47973">
    <property type="entry name" value="Ribosomal protein S7"/>
    <property type="match status" value="1"/>
</dbReference>
<dbReference type="PROSITE" id="PS00052">
    <property type="entry name" value="RIBOSOMAL_S7"/>
    <property type="match status" value="1"/>
</dbReference>
<evidence type="ECO:0000255" key="1">
    <source>
        <dbReference type="HAMAP-Rule" id="MF_00480"/>
    </source>
</evidence>
<evidence type="ECO:0000305" key="2"/>
<reference key="1">
    <citation type="journal article" date="2005" name="Genome Res.">
        <title>Comparative and functional genomic analyses of the pathogenicity of phytopathogen Xanthomonas campestris pv. campestris.</title>
        <authorList>
            <person name="Qian W."/>
            <person name="Jia Y."/>
            <person name="Ren S.-X."/>
            <person name="He Y.-Q."/>
            <person name="Feng J.-X."/>
            <person name="Lu L.-F."/>
            <person name="Sun Q."/>
            <person name="Ying G."/>
            <person name="Tang D.-J."/>
            <person name="Tang H."/>
            <person name="Wu W."/>
            <person name="Hao P."/>
            <person name="Wang L."/>
            <person name="Jiang B.-L."/>
            <person name="Zeng S."/>
            <person name="Gu W.-Y."/>
            <person name="Lu G."/>
            <person name="Rong L."/>
            <person name="Tian Y."/>
            <person name="Yao Z."/>
            <person name="Fu G."/>
            <person name="Chen B."/>
            <person name="Fang R."/>
            <person name="Qiang B."/>
            <person name="Chen Z."/>
            <person name="Zhao G.-P."/>
            <person name="Tang J.-L."/>
            <person name="He C."/>
        </authorList>
    </citation>
    <scope>NUCLEOTIDE SEQUENCE [LARGE SCALE GENOMIC DNA]</scope>
    <source>
        <strain>8004</strain>
    </source>
</reference>
<accession>Q4URD5</accession>
<feature type="chain" id="PRO_0000226540" description="Small ribosomal subunit protein uS7">
    <location>
        <begin position="1"/>
        <end position="155"/>
    </location>
</feature>